<keyword id="KW-0012">Acyltransferase</keyword>
<keyword id="KW-0963">Cytoplasm</keyword>
<keyword id="KW-0275">Fatty acid biosynthesis</keyword>
<keyword id="KW-0276">Fatty acid metabolism</keyword>
<keyword id="KW-0444">Lipid biosynthesis</keyword>
<keyword id="KW-0443">Lipid metabolism</keyword>
<keyword id="KW-0511">Multifunctional enzyme</keyword>
<keyword id="KW-0808">Transferase</keyword>
<accession>C1CPS7</accession>
<organism>
    <name type="scientific">Streptococcus pneumoniae (strain Taiwan19F-14)</name>
    <dbReference type="NCBI Taxonomy" id="487213"/>
    <lineage>
        <taxon>Bacteria</taxon>
        <taxon>Bacillati</taxon>
        <taxon>Bacillota</taxon>
        <taxon>Bacilli</taxon>
        <taxon>Lactobacillales</taxon>
        <taxon>Streptococcaceae</taxon>
        <taxon>Streptococcus</taxon>
    </lineage>
</organism>
<proteinExistence type="inferred from homology"/>
<feature type="chain" id="PRO_1000187906" description="Beta-ketoacyl-[acyl-carrier-protein] synthase III">
    <location>
        <begin position="1"/>
        <end position="324"/>
    </location>
</feature>
<feature type="region of interest" description="ACP-binding" evidence="1">
    <location>
        <begin position="250"/>
        <end position="254"/>
    </location>
</feature>
<feature type="active site" evidence="1">
    <location>
        <position position="112"/>
    </location>
</feature>
<feature type="active site" evidence="1">
    <location>
        <position position="249"/>
    </location>
</feature>
<feature type="active site" evidence="1">
    <location>
        <position position="279"/>
    </location>
</feature>
<comment type="function">
    <text evidence="1">Catalyzes the condensation reaction of fatty acid synthesis by the addition to an acyl acceptor of two carbons from malonyl-ACP. Catalyzes the first condensation reaction which initiates fatty acid synthesis and may therefore play a role in governing the total rate of fatty acid production. Possesses both acetoacetyl-ACP synthase and acetyl transacylase activities. Its substrate specificity determines the biosynthesis of branched-chain and/or straight-chain of fatty acids.</text>
</comment>
<comment type="catalytic activity">
    <reaction evidence="1">
        <text>malonyl-[ACP] + acetyl-CoA + H(+) = 3-oxobutanoyl-[ACP] + CO2 + CoA</text>
        <dbReference type="Rhea" id="RHEA:12080"/>
        <dbReference type="Rhea" id="RHEA-COMP:9623"/>
        <dbReference type="Rhea" id="RHEA-COMP:9625"/>
        <dbReference type="ChEBI" id="CHEBI:15378"/>
        <dbReference type="ChEBI" id="CHEBI:16526"/>
        <dbReference type="ChEBI" id="CHEBI:57287"/>
        <dbReference type="ChEBI" id="CHEBI:57288"/>
        <dbReference type="ChEBI" id="CHEBI:78449"/>
        <dbReference type="ChEBI" id="CHEBI:78450"/>
        <dbReference type="EC" id="2.3.1.180"/>
    </reaction>
</comment>
<comment type="pathway">
    <text evidence="1">Lipid metabolism; fatty acid biosynthesis.</text>
</comment>
<comment type="subunit">
    <text evidence="1">Homodimer.</text>
</comment>
<comment type="subcellular location">
    <subcellularLocation>
        <location evidence="1">Cytoplasm</location>
    </subcellularLocation>
</comment>
<comment type="domain">
    <text evidence="1">The last Arg residue of the ACP-binding site is essential for the weak association between ACP/AcpP and FabH.</text>
</comment>
<comment type="similarity">
    <text evidence="1">Belongs to the thiolase-like superfamily. FabH family.</text>
</comment>
<protein>
    <recommendedName>
        <fullName evidence="1">Beta-ketoacyl-[acyl-carrier-protein] synthase III</fullName>
        <shortName evidence="1">Beta-ketoacyl-ACP synthase III</shortName>
        <shortName evidence="1">KAS III</shortName>
        <ecNumber evidence="1">2.3.1.180</ecNumber>
    </recommendedName>
    <alternativeName>
        <fullName evidence="1">3-oxoacyl-[acyl-carrier-protein] synthase 3</fullName>
    </alternativeName>
    <alternativeName>
        <fullName evidence="1">3-oxoacyl-[acyl-carrier-protein] synthase III</fullName>
    </alternativeName>
</protein>
<dbReference type="EC" id="2.3.1.180" evidence="1"/>
<dbReference type="EMBL" id="CP000921">
    <property type="protein sequence ID" value="ACO24249.1"/>
    <property type="molecule type" value="Genomic_DNA"/>
</dbReference>
<dbReference type="RefSeq" id="WP_000852948.1">
    <property type="nucleotide sequence ID" value="NC_012469.1"/>
</dbReference>
<dbReference type="SMR" id="C1CPS7"/>
<dbReference type="KEGG" id="snt:SPT_0454"/>
<dbReference type="HOGENOM" id="CLU_039592_4_1_9"/>
<dbReference type="UniPathway" id="UPA00094"/>
<dbReference type="GO" id="GO:0005737">
    <property type="term" value="C:cytoplasm"/>
    <property type="evidence" value="ECO:0007669"/>
    <property type="project" value="UniProtKB-SubCell"/>
</dbReference>
<dbReference type="GO" id="GO:0004315">
    <property type="term" value="F:3-oxoacyl-[acyl-carrier-protein] synthase activity"/>
    <property type="evidence" value="ECO:0007669"/>
    <property type="project" value="InterPro"/>
</dbReference>
<dbReference type="GO" id="GO:0033818">
    <property type="term" value="F:beta-ketoacyl-acyl-carrier-protein synthase III activity"/>
    <property type="evidence" value="ECO:0007669"/>
    <property type="project" value="UniProtKB-UniRule"/>
</dbReference>
<dbReference type="GO" id="GO:0006633">
    <property type="term" value="P:fatty acid biosynthetic process"/>
    <property type="evidence" value="ECO:0007669"/>
    <property type="project" value="UniProtKB-UniRule"/>
</dbReference>
<dbReference type="CDD" id="cd00830">
    <property type="entry name" value="KAS_III"/>
    <property type="match status" value="1"/>
</dbReference>
<dbReference type="Gene3D" id="3.40.47.10">
    <property type="match status" value="1"/>
</dbReference>
<dbReference type="HAMAP" id="MF_01815">
    <property type="entry name" value="FabH"/>
    <property type="match status" value="1"/>
</dbReference>
<dbReference type="InterPro" id="IPR013747">
    <property type="entry name" value="ACP_syn_III_C"/>
</dbReference>
<dbReference type="InterPro" id="IPR013751">
    <property type="entry name" value="ACP_syn_III_N"/>
</dbReference>
<dbReference type="InterPro" id="IPR004655">
    <property type="entry name" value="FabH"/>
</dbReference>
<dbReference type="InterPro" id="IPR016039">
    <property type="entry name" value="Thiolase-like"/>
</dbReference>
<dbReference type="NCBIfam" id="TIGR00747">
    <property type="entry name" value="fabH"/>
    <property type="match status" value="1"/>
</dbReference>
<dbReference type="NCBIfam" id="NF006829">
    <property type="entry name" value="PRK09352.1"/>
    <property type="match status" value="1"/>
</dbReference>
<dbReference type="PANTHER" id="PTHR43091">
    <property type="entry name" value="3-OXOACYL-[ACYL-CARRIER-PROTEIN] SYNTHASE"/>
    <property type="match status" value="1"/>
</dbReference>
<dbReference type="PANTHER" id="PTHR43091:SF1">
    <property type="entry name" value="BETA-KETOACYL-[ACYL-CARRIER-PROTEIN] SYNTHASE III, CHLOROPLASTIC"/>
    <property type="match status" value="1"/>
</dbReference>
<dbReference type="Pfam" id="PF08545">
    <property type="entry name" value="ACP_syn_III"/>
    <property type="match status" value="1"/>
</dbReference>
<dbReference type="Pfam" id="PF08541">
    <property type="entry name" value="ACP_syn_III_C"/>
    <property type="match status" value="1"/>
</dbReference>
<dbReference type="SUPFAM" id="SSF53901">
    <property type="entry name" value="Thiolase-like"/>
    <property type="match status" value="1"/>
</dbReference>
<name>FABH_STRZT</name>
<sequence length="324" mass="34904">MAFAKISQVAHYVPEQVVTNHDLAQIMDTNDEWISSRTGIRQRHISRTESTSDLATEVAKKLMAKAGITGEELDFIILATITPDSMMPSTAARVQANIGANKAFAFDLTAACSGFVFALSTAEKFIASGRFQKGLVIGSETLSKAVDWSDRSTAVLFGDGAGGVLLEASEQEHFLAESLNSDGSRSECLTYGHSGLHSPFSDQESADSFLKMDGRTVFDFAIRDVAKSIKQTIDESPIEVTDLDYLLLHQANDRILDKMARKIGVDRAKLPANMMEYGNTSAASIPILLSECVEQGLIPLDGSQTVLLSGFGGGLTWGTLILTI</sequence>
<reference key="1">
    <citation type="journal article" date="2010" name="Genome Biol.">
        <title>Structure and dynamics of the pan-genome of Streptococcus pneumoniae and closely related species.</title>
        <authorList>
            <person name="Donati C."/>
            <person name="Hiller N.L."/>
            <person name="Tettelin H."/>
            <person name="Muzzi A."/>
            <person name="Croucher N.J."/>
            <person name="Angiuoli S.V."/>
            <person name="Oggioni M."/>
            <person name="Dunning Hotopp J.C."/>
            <person name="Hu F.Z."/>
            <person name="Riley D.R."/>
            <person name="Covacci A."/>
            <person name="Mitchell T.J."/>
            <person name="Bentley S.D."/>
            <person name="Kilian M."/>
            <person name="Ehrlich G.D."/>
            <person name="Rappuoli R."/>
            <person name="Moxon E.R."/>
            <person name="Masignani V."/>
        </authorList>
    </citation>
    <scope>NUCLEOTIDE SEQUENCE [LARGE SCALE GENOMIC DNA]</scope>
    <source>
        <strain>Taiwan19F-14</strain>
    </source>
</reference>
<evidence type="ECO:0000255" key="1">
    <source>
        <dbReference type="HAMAP-Rule" id="MF_01815"/>
    </source>
</evidence>
<gene>
    <name evidence="1" type="primary">fabH</name>
    <name type="ordered locus">SPT_0454</name>
</gene>